<protein>
    <recommendedName>
        <fullName evidence="4">Tol-Pal system protein TolA</fullName>
    </recommendedName>
</protein>
<keyword id="KW-0131">Cell cycle</keyword>
<keyword id="KW-0132">Cell division</keyword>
<keyword id="KW-0997">Cell inner membrane</keyword>
<keyword id="KW-1003">Cell membrane</keyword>
<keyword id="KW-0472">Membrane</keyword>
<keyword id="KW-1185">Reference proteome</keyword>
<keyword id="KW-0677">Repeat</keyword>
<keyword id="KW-0812">Transmembrane</keyword>
<keyword id="KW-1133">Transmembrane helix</keyword>
<dbReference type="EMBL" id="L42023">
    <property type="protein sequence ID" value="AAC22041.1"/>
    <property type="molecule type" value="Genomic_DNA"/>
</dbReference>
<dbReference type="EMBL" id="U32470">
    <property type="protein sequence ID" value="AAC44596.1"/>
    <property type="molecule type" value="Genomic_DNA"/>
</dbReference>
<dbReference type="PIR" id="G64064">
    <property type="entry name" value="G64064"/>
</dbReference>
<dbReference type="RefSeq" id="NP_438544.1">
    <property type="nucleotide sequence ID" value="NC_000907.1"/>
</dbReference>
<dbReference type="SMR" id="P44678"/>
<dbReference type="STRING" id="71421.HI_0383"/>
<dbReference type="EnsemblBacteria" id="AAC22041">
    <property type="protein sequence ID" value="AAC22041"/>
    <property type="gene ID" value="HI_0383"/>
</dbReference>
<dbReference type="KEGG" id="hin:HI_0383"/>
<dbReference type="PATRIC" id="fig|71421.8.peg.401"/>
<dbReference type="eggNOG" id="COG3064">
    <property type="taxonomic scope" value="Bacteria"/>
</dbReference>
<dbReference type="HOGENOM" id="CLU_035992_0_0_6"/>
<dbReference type="OrthoDB" id="6194496at2"/>
<dbReference type="BioCyc" id="HINF71421:G1GJ1-398-MONOMER"/>
<dbReference type="Proteomes" id="UP000000579">
    <property type="component" value="Chromosome"/>
</dbReference>
<dbReference type="GO" id="GO:0005886">
    <property type="term" value="C:plasma membrane"/>
    <property type="evidence" value="ECO:0007669"/>
    <property type="project" value="UniProtKB-SubCell"/>
</dbReference>
<dbReference type="GO" id="GO:0019534">
    <property type="term" value="F:toxin transmembrane transporter activity"/>
    <property type="evidence" value="ECO:0007669"/>
    <property type="project" value="InterPro"/>
</dbReference>
<dbReference type="GO" id="GO:0043213">
    <property type="term" value="P:bacteriocin transport"/>
    <property type="evidence" value="ECO:0007669"/>
    <property type="project" value="InterPro"/>
</dbReference>
<dbReference type="GO" id="GO:0051301">
    <property type="term" value="P:cell division"/>
    <property type="evidence" value="ECO:0007669"/>
    <property type="project" value="UniProtKB-KW"/>
</dbReference>
<dbReference type="Gene3D" id="3.30.1150.10">
    <property type="match status" value="1"/>
</dbReference>
<dbReference type="InterPro" id="IPR014161">
    <property type="entry name" value="Tol-Pal_TolA"/>
</dbReference>
<dbReference type="NCBIfam" id="NF007065">
    <property type="entry name" value="PRK09510.1"/>
    <property type="match status" value="1"/>
</dbReference>
<dbReference type="NCBIfam" id="TIGR02794">
    <property type="entry name" value="tolA_full"/>
    <property type="match status" value="1"/>
</dbReference>
<dbReference type="Pfam" id="PF06519">
    <property type="entry name" value="TolA"/>
    <property type="match status" value="1"/>
</dbReference>
<dbReference type="SUPFAM" id="SSF74653">
    <property type="entry name" value="TolA/TonB C-terminal domain"/>
    <property type="match status" value="1"/>
</dbReference>
<sequence>MQNNRQKKGINAFAISILLHFILFGLLILSSLYHTVEIMGGGEGEGDVIGAVIVDTGTAAQEWGRIQQQKKGQADKQKRPEPVVEEKPPEPNQEEIKHQQEVQRQEELKRQQEQQRQQEIKKQQEQARQEALEKQKQAEEAKAKQAAEAAKLKADAEAKRLAAAAKQAEEEAKAKAAEIAAQKAKQEAEAKAKLEAEAKAKAVAEAKAKAEAEAKAKAAAEAKAKADAEAKAATEAKRKADQASLDDFLNGGDIGGGSASKGGNTNKGGTQGSGAALGSGDGGKVGDQYAGVIKKEIQRRFLKDPNFAGKVCRIKIQLGRDGTILGYQKISGSDDICSAALSAVARTKKVPAAPSDEIYEKYKSPIIDFDIR</sequence>
<comment type="function">
    <text evidence="1">Part of the Tol-Pal system, which plays a role in outer membrane invagination during cell division and is important for maintaining outer membrane integrity.</text>
</comment>
<comment type="subunit">
    <text evidence="1">The Tol-Pal system is composed of five core proteins: the inner membrane proteins TolA, TolQ and TolR, the periplasmic protein TolB and the outer membrane protein Pal. They form a network linking the inner and outer membranes and the peptidoglycan layer.</text>
</comment>
<comment type="subcellular location">
    <subcellularLocation>
        <location evidence="1">Cell inner membrane</location>
        <topology evidence="1">Single-pass membrane protein</topology>
    </subcellularLocation>
</comment>
<comment type="similarity">
    <text evidence="4">Belongs to the TolA family.</text>
</comment>
<proteinExistence type="inferred from homology"/>
<evidence type="ECO:0000250" key="1">
    <source>
        <dbReference type="UniProtKB" id="P19934"/>
    </source>
</evidence>
<evidence type="ECO:0000255" key="2"/>
<evidence type="ECO:0000256" key="3">
    <source>
        <dbReference type="SAM" id="MobiDB-lite"/>
    </source>
</evidence>
<evidence type="ECO:0000305" key="4"/>
<organism>
    <name type="scientific">Haemophilus influenzae (strain ATCC 51907 / DSM 11121 / KW20 / Rd)</name>
    <dbReference type="NCBI Taxonomy" id="71421"/>
    <lineage>
        <taxon>Bacteria</taxon>
        <taxon>Pseudomonadati</taxon>
        <taxon>Pseudomonadota</taxon>
        <taxon>Gammaproteobacteria</taxon>
        <taxon>Pasteurellales</taxon>
        <taxon>Pasteurellaceae</taxon>
        <taxon>Haemophilus</taxon>
    </lineage>
</organism>
<name>TOLA_HAEIN</name>
<feature type="chain" id="PRO_0000072623" description="Tol-Pal system protein TolA">
    <location>
        <begin position="1"/>
        <end position="372"/>
    </location>
</feature>
<feature type="topological domain" description="Cytoplasmic" evidence="1">
    <location>
        <begin position="1"/>
        <end position="8"/>
    </location>
</feature>
<feature type="transmembrane region" description="Helical" evidence="2">
    <location>
        <begin position="9"/>
        <end position="29"/>
    </location>
</feature>
<feature type="topological domain" description="Periplasmic" evidence="1">
    <location>
        <begin position="30"/>
        <end position="372"/>
    </location>
</feature>
<feature type="region of interest" description="Disordered" evidence="3">
    <location>
        <begin position="64"/>
        <end position="139"/>
    </location>
</feature>
<feature type="region of interest" description="Disordered" evidence="3">
    <location>
        <begin position="166"/>
        <end position="217"/>
    </location>
</feature>
<feature type="region of interest" description="Disordered" evidence="3">
    <location>
        <begin position="256"/>
        <end position="281"/>
    </location>
</feature>
<feature type="compositionally biased region" description="Basic and acidic residues" evidence="3">
    <location>
        <begin position="72"/>
        <end position="139"/>
    </location>
</feature>
<feature type="compositionally biased region" description="Basic and acidic residues" evidence="3">
    <location>
        <begin position="167"/>
        <end position="176"/>
    </location>
</feature>
<feature type="compositionally biased region" description="Basic and acidic residues" evidence="3">
    <location>
        <begin position="184"/>
        <end position="217"/>
    </location>
</feature>
<feature type="sequence variant" description="In strain: 1479.">
    <original>V</original>
    <variation>A</variation>
    <location>
        <position position="48"/>
    </location>
</feature>
<feature type="sequence variant" description="In strain: 1479.">
    <original>K</original>
    <variation>R</variation>
    <location>
        <position position="142"/>
    </location>
</feature>
<feature type="sequence variant" description="In strain: 1479.">
    <original>A</original>
    <variation>P</variation>
    <location>
        <position position="165"/>
    </location>
</feature>
<feature type="sequence variant" description="In strain: 1479.">
    <original>A</original>
    <variation>R</variation>
    <location>
        <position position="190"/>
    </location>
</feature>
<feature type="sequence variant" description="In strain: 1479.">
    <original>V</original>
    <variation>A</variation>
    <location>
        <position position="203"/>
    </location>
</feature>
<feature type="sequence variant" description="In strain: 1479.">
    <original>D</original>
    <variation>A</variation>
    <location>
        <position position="227"/>
    </location>
</feature>
<feature type="sequence variant" description="In strain: 1479.">
    <original>A</original>
    <variation>AKAAAEAKAKA</variation>
    <location>
        <position position="232"/>
    </location>
</feature>
<feature type="sequence variant" description="In strain: 1479.">
    <original>T</original>
    <variation>A</variation>
    <location>
        <position position="234"/>
    </location>
</feature>
<feature type="sequence variant" description="In strain: 1479.">
    <original>L</original>
    <variation>F</variation>
    <location>
        <position position="249"/>
    </location>
</feature>
<feature type="sequence variant" description="In strain: 1479.">
    <original>I</original>
    <variation>V</variation>
    <location>
        <position position="254"/>
    </location>
</feature>
<feature type="sequence variant" description="In strain: 1479.">
    <original>N</original>
    <variation>S</variation>
    <location>
        <position position="306"/>
    </location>
</feature>
<feature type="sequence variant" description="In strain: 1479.">
    <original>T</original>
    <variation>A</variation>
    <location>
        <position position="323"/>
    </location>
</feature>
<feature type="sequence variant" description="In strain: 1479.">
    <original>S</original>
    <variation>P</variation>
    <location>
        <position position="333"/>
    </location>
</feature>
<gene>
    <name type="primary">tolA</name>
    <name type="ordered locus">HI_0383</name>
</gene>
<reference key="1">
    <citation type="journal article" date="1995" name="Science">
        <title>Whole-genome random sequencing and assembly of Haemophilus influenzae Rd.</title>
        <authorList>
            <person name="Fleischmann R.D."/>
            <person name="Adams M.D."/>
            <person name="White O."/>
            <person name="Clayton R.A."/>
            <person name="Kirkness E.F."/>
            <person name="Kerlavage A.R."/>
            <person name="Bult C.J."/>
            <person name="Tomb J.-F."/>
            <person name="Dougherty B.A."/>
            <person name="Merrick J.M."/>
            <person name="McKenney K."/>
            <person name="Sutton G.G."/>
            <person name="FitzHugh W."/>
            <person name="Fields C.A."/>
            <person name="Gocayne J.D."/>
            <person name="Scott J.D."/>
            <person name="Shirley R."/>
            <person name="Liu L.-I."/>
            <person name="Glodek A."/>
            <person name="Kelley J.M."/>
            <person name="Weidman J.F."/>
            <person name="Phillips C.A."/>
            <person name="Spriggs T."/>
            <person name="Hedblom E."/>
            <person name="Cotton M.D."/>
            <person name="Utterback T.R."/>
            <person name="Hanna M.C."/>
            <person name="Nguyen D.T."/>
            <person name="Saudek D.M."/>
            <person name="Brandon R.C."/>
            <person name="Fine L.D."/>
            <person name="Fritchman J.L."/>
            <person name="Fuhrmann J.L."/>
            <person name="Geoghagen N.S.M."/>
            <person name="Gnehm C.L."/>
            <person name="McDonald L.A."/>
            <person name="Small K.V."/>
            <person name="Fraser C.M."/>
            <person name="Smith H.O."/>
            <person name="Venter J.C."/>
        </authorList>
    </citation>
    <scope>NUCLEOTIDE SEQUENCE [LARGE SCALE GENOMIC DNA]</scope>
    <source>
        <strain>ATCC 51907 / DSM 11121 / KW20 / Rd</strain>
    </source>
</reference>
<reference key="2">
    <citation type="journal article" date="1996" name="Gene">
        <title>Isolation and characterization of the Haemophilus influenzae tolQ, tolR, tolA and tolB genes.</title>
        <authorList>
            <person name="Sen K."/>
            <person name="Sikkema D.J."/>
            <person name="Murphy T.F."/>
        </authorList>
    </citation>
    <scope>NUCLEOTIDE SEQUENCE [GENOMIC DNA]</scope>
    <source>
        <strain>1479</strain>
    </source>
</reference>
<accession>P44678</accession>
<accession>P94810</accession>